<accession>A7N9R6</accession>
<comment type="function">
    <text evidence="1">Catalyzes the reversible phosphorylation of UMP to UDP.</text>
</comment>
<comment type="catalytic activity">
    <reaction evidence="1">
        <text>UMP + ATP = UDP + ADP</text>
        <dbReference type="Rhea" id="RHEA:24400"/>
        <dbReference type="ChEBI" id="CHEBI:30616"/>
        <dbReference type="ChEBI" id="CHEBI:57865"/>
        <dbReference type="ChEBI" id="CHEBI:58223"/>
        <dbReference type="ChEBI" id="CHEBI:456216"/>
        <dbReference type="EC" id="2.7.4.22"/>
    </reaction>
</comment>
<comment type="activity regulation">
    <text evidence="1">Inhibited by UTP.</text>
</comment>
<comment type="pathway">
    <text evidence="1">Pyrimidine metabolism; CTP biosynthesis via de novo pathway; UDP from UMP (UMPK route): step 1/1.</text>
</comment>
<comment type="subunit">
    <text evidence="1">Homohexamer.</text>
</comment>
<comment type="subcellular location">
    <subcellularLocation>
        <location evidence="1">Cytoplasm</location>
    </subcellularLocation>
</comment>
<comment type="similarity">
    <text evidence="1">Belongs to the UMP kinase family.</text>
</comment>
<gene>
    <name evidence="1" type="primary">pyrH</name>
    <name type="ordered locus">FTA_0242</name>
</gene>
<feature type="chain" id="PRO_0000323848" description="Uridylate kinase">
    <location>
        <begin position="1"/>
        <end position="249"/>
    </location>
</feature>
<feature type="binding site" evidence="1">
    <location>
        <begin position="21"/>
        <end position="24"/>
    </location>
    <ligand>
        <name>ATP</name>
        <dbReference type="ChEBI" id="CHEBI:30616"/>
    </ligand>
</feature>
<feature type="binding site" evidence="1">
    <location>
        <position position="63"/>
    </location>
    <ligand>
        <name>UMP</name>
        <dbReference type="ChEBI" id="CHEBI:57865"/>
    </ligand>
</feature>
<feature type="binding site" evidence="1">
    <location>
        <position position="64"/>
    </location>
    <ligand>
        <name>ATP</name>
        <dbReference type="ChEBI" id="CHEBI:30616"/>
    </ligand>
</feature>
<feature type="binding site" evidence="1">
    <location>
        <position position="68"/>
    </location>
    <ligand>
        <name>ATP</name>
        <dbReference type="ChEBI" id="CHEBI:30616"/>
    </ligand>
</feature>
<feature type="binding site" evidence="1">
    <location>
        <position position="84"/>
    </location>
    <ligand>
        <name>UMP</name>
        <dbReference type="ChEBI" id="CHEBI:57865"/>
    </ligand>
</feature>
<feature type="binding site" evidence="1">
    <location>
        <begin position="145"/>
        <end position="152"/>
    </location>
    <ligand>
        <name>UMP</name>
        <dbReference type="ChEBI" id="CHEBI:57865"/>
    </ligand>
</feature>
<feature type="binding site" evidence="1">
    <location>
        <position position="172"/>
    </location>
    <ligand>
        <name>ATP</name>
        <dbReference type="ChEBI" id="CHEBI:30616"/>
    </ligand>
</feature>
<feature type="binding site" evidence="1">
    <location>
        <position position="178"/>
    </location>
    <ligand>
        <name>ATP</name>
        <dbReference type="ChEBI" id="CHEBI:30616"/>
    </ligand>
</feature>
<feature type="binding site" evidence="1">
    <location>
        <position position="181"/>
    </location>
    <ligand>
        <name>ATP</name>
        <dbReference type="ChEBI" id="CHEBI:30616"/>
    </ligand>
</feature>
<sequence>MSNDSSECSQKLPKLKRILLKLSGESLSADQGFGINVESAQPIINQIKTLTNFGVELALVVGGGNILRGGRANFGNKIRRATADSMGMIATMINALALRDMLISEGVDAEVFSAKGVDGLLKVASAHEFNQELAKGRVLIFAGGTGNPFVTTDTTASLRAVEIGADALLKATTVNGVYDKDPNKYSDAKRFDKVTFSEVVSKELNVMDLGAFTQCRDFSIPIYVFDLTQPNALVDAVLDSKYGTWVTLD</sequence>
<dbReference type="EC" id="2.7.4.22" evidence="1"/>
<dbReference type="EMBL" id="CP000803">
    <property type="protein sequence ID" value="ABU60719.1"/>
    <property type="molecule type" value="Genomic_DNA"/>
</dbReference>
<dbReference type="RefSeq" id="WP_003014296.1">
    <property type="nucleotide sequence ID" value="NC_009749.1"/>
</dbReference>
<dbReference type="SMR" id="A7N9R6"/>
<dbReference type="KEGG" id="fta:FTA_0242"/>
<dbReference type="HOGENOM" id="CLU_033861_0_0_6"/>
<dbReference type="UniPathway" id="UPA00159">
    <property type="reaction ID" value="UER00275"/>
</dbReference>
<dbReference type="GO" id="GO:0005737">
    <property type="term" value="C:cytoplasm"/>
    <property type="evidence" value="ECO:0007669"/>
    <property type="project" value="UniProtKB-SubCell"/>
</dbReference>
<dbReference type="GO" id="GO:0005524">
    <property type="term" value="F:ATP binding"/>
    <property type="evidence" value="ECO:0007669"/>
    <property type="project" value="UniProtKB-KW"/>
</dbReference>
<dbReference type="GO" id="GO:0033862">
    <property type="term" value="F:UMP kinase activity"/>
    <property type="evidence" value="ECO:0007669"/>
    <property type="project" value="UniProtKB-EC"/>
</dbReference>
<dbReference type="GO" id="GO:0044210">
    <property type="term" value="P:'de novo' CTP biosynthetic process"/>
    <property type="evidence" value="ECO:0007669"/>
    <property type="project" value="UniProtKB-UniRule"/>
</dbReference>
<dbReference type="GO" id="GO:0006225">
    <property type="term" value="P:UDP biosynthetic process"/>
    <property type="evidence" value="ECO:0007669"/>
    <property type="project" value="TreeGrafter"/>
</dbReference>
<dbReference type="CDD" id="cd04254">
    <property type="entry name" value="AAK_UMPK-PyrH-Ec"/>
    <property type="match status" value="1"/>
</dbReference>
<dbReference type="FunFam" id="3.40.1160.10:FF:000001">
    <property type="entry name" value="Uridylate kinase"/>
    <property type="match status" value="1"/>
</dbReference>
<dbReference type="Gene3D" id="3.40.1160.10">
    <property type="entry name" value="Acetylglutamate kinase-like"/>
    <property type="match status" value="1"/>
</dbReference>
<dbReference type="HAMAP" id="MF_01220_B">
    <property type="entry name" value="PyrH_B"/>
    <property type="match status" value="1"/>
</dbReference>
<dbReference type="InterPro" id="IPR036393">
    <property type="entry name" value="AceGlu_kinase-like_sf"/>
</dbReference>
<dbReference type="InterPro" id="IPR001048">
    <property type="entry name" value="Asp/Glu/Uridylate_kinase"/>
</dbReference>
<dbReference type="InterPro" id="IPR011817">
    <property type="entry name" value="Uridylate_kinase"/>
</dbReference>
<dbReference type="InterPro" id="IPR015963">
    <property type="entry name" value="Uridylate_kinase_bac"/>
</dbReference>
<dbReference type="NCBIfam" id="TIGR02075">
    <property type="entry name" value="pyrH_bact"/>
    <property type="match status" value="1"/>
</dbReference>
<dbReference type="PANTHER" id="PTHR42833">
    <property type="entry name" value="URIDYLATE KINASE"/>
    <property type="match status" value="1"/>
</dbReference>
<dbReference type="PANTHER" id="PTHR42833:SF4">
    <property type="entry name" value="URIDYLATE KINASE PUMPKIN, CHLOROPLASTIC"/>
    <property type="match status" value="1"/>
</dbReference>
<dbReference type="Pfam" id="PF00696">
    <property type="entry name" value="AA_kinase"/>
    <property type="match status" value="1"/>
</dbReference>
<dbReference type="PIRSF" id="PIRSF005650">
    <property type="entry name" value="Uridylate_kin"/>
    <property type="match status" value="1"/>
</dbReference>
<dbReference type="SUPFAM" id="SSF53633">
    <property type="entry name" value="Carbamate kinase-like"/>
    <property type="match status" value="1"/>
</dbReference>
<name>PYRH_FRATF</name>
<evidence type="ECO:0000255" key="1">
    <source>
        <dbReference type="HAMAP-Rule" id="MF_01220"/>
    </source>
</evidence>
<proteinExistence type="inferred from homology"/>
<protein>
    <recommendedName>
        <fullName evidence="1">Uridylate kinase</fullName>
        <shortName evidence="1">UK</shortName>
        <ecNumber evidence="1">2.7.4.22</ecNumber>
    </recommendedName>
    <alternativeName>
        <fullName evidence="1">Uridine monophosphate kinase</fullName>
        <shortName evidence="1">UMP kinase</shortName>
        <shortName evidence="1">UMPK</shortName>
    </alternativeName>
</protein>
<organism>
    <name type="scientific">Francisella tularensis subsp. holarctica (strain FTNF002-00 / FTA)</name>
    <dbReference type="NCBI Taxonomy" id="458234"/>
    <lineage>
        <taxon>Bacteria</taxon>
        <taxon>Pseudomonadati</taxon>
        <taxon>Pseudomonadota</taxon>
        <taxon>Gammaproteobacteria</taxon>
        <taxon>Thiotrichales</taxon>
        <taxon>Francisellaceae</taxon>
        <taxon>Francisella</taxon>
    </lineage>
</organism>
<keyword id="KW-0067">ATP-binding</keyword>
<keyword id="KW-0963">Cytoplasm</keyword>
<keyword id="KW-0418">Kinase</keyword>
<keyword id="KW-0547">Nucleotide-binding</keyword>
<keyword id="KW-0665">Pyrimidine biosynthesis</keyword>
<keyword id="KW-0808">Transferase</keyword>
<reference key="1">
    <citation type="journal article" date="2009" name="PLoS ONE">
        <title>Complete genome sequence of Francisella tularensis subspecies holarctica FTNF002-00.</title>
        <authorList>
            <person name="Barabote R.D."/>
            <person name="Xie G."/>
            <person name="Brettin T.S."/>
            <person name="Hinrichs S.H."/>
            <person name="Fey P.D."/>
            <person name="Jay J.J."/>
            <person name="Engle J.L."/>
            <person name="Godbole S.D."/>
            <person name="Noronha J.M."/>
            <person name="Scheuermann R.H."/>
            <person name="Zhou L.W."/>
            <person name="Lion C."/>
            <person name="Dempsey M.P."/>
        </authorList>
    </citation>
    <scope>NUCLEOTIDE SEQUENCE [LARGE SCALE GENOMIC DNA]</scope>
    <source>
        <strain>FTNF002-00 / FTA</strain>
    </source>
</reference>